<name>Y2262_ARATH</name>
<reference key="1">
    <citation type="journal article" date="1999" name="Nature">
        <title>Sequence and analysis of chromosome 2 of the plant Arabidopsis thaliana.</title>
        <authorList>
            <person name="Lin X."/>
            <person name="Kaul S."/>
            <person name="Rounsley S.D."/>
            <person name="Shea T.P."/>
            <person name="Benito M.-I."/>
            <person name="Town C.D."/>
            <person name="Fujii C.Y."/>
            <person name="Mason T.M."/>
            <person name="Bowman C.L."/>
            <person name="Barnstead M.E."/>
            <person name="Feldblyum T.V."/>
            <person name="Buell C.R."/>
            <person name="Ketchum K.A."/>
            <person name="Lee J.J."/>
            <person name="Ronning C.M."/>
            <person name="Koo H.L."/>
            <person name="Moffat K.S."/>
            <person name="Cronin L.A."/>
            <person name="Shen M."/>
            <person name="Pai G."/>
            <person name="Van Aken S."/>
            <person name="Umayam L."/>
            <person name="Tallon L.J."/>
            <person name="Gill J.E."/>
            <person name="Adams M.D."/>
            <person name="Carrera A.J."/>
            <person name="Creasy T.H."/>
            <person name="Goodman H.M."/>
            <person name="Somerville C.R."/>
            <person name="Copenhaver G.P."/>
            <person name="Preuss D."/>
            <person name="Nierman W.C."/>
            <person name="White O."/>
            <person name="Eisen J.A."/>
            <person name="Salzberg S.L."/>
            <person name="Fraser C.M."/>
            <person name="Venter J.C."/>
        </authorList>
    </citation>
    <scope>NUCLEOTIDE SEQUENCE [LARGE SCALE GENOMIC DNA]</scope>
    <source>
        <strain>cv. Columbia</strain>
    </source>
</reference>
<reference key="2">
    <citation type="journal article" date="2017" name="Plant J.">
        <title>Araport11: a complete reannotation of the Arabidopsis thaliana reference genome.</title>
        <authorList>
            <person name="Cheng C.Y."/>
            <person name="Krishnakumar V."/>
            <person name="Chan A.P."/>
            <person name="Thibaud-Nissen F."/>
            <person name="Schobel S."/>
            <person name="Town C.D."/>
        </authorList>
    </citation>
    <scope>GENOME REANNOTATION</scope>
    <source>
        <strain>cv. Columbia</strain>
    </source>
</reference>
<reference key="3">
    <citation type="journal article" date="2002" name="Plant Physiol.">
        <title>Cloning and sequencing of cDNAs for hypothetical genes from chromosome 2 of Arabidopsis.</title>
        <authorList>
            <person name="Xiao Y.-L."/>
            <person name="Malik M."/>
            <person name="Whitelaw C.A."/>
            <person name="Town C.D."/>
        </authorList>
    </citation>
    <scope>NUCLEOTIDE SEQUENCE [LARGE SCALE MRNA] (ISOFORMS 2 AND 3)</scope>
    <source>
        <strain>cv. Columbia</strain>
    </source>
</reference>
<reference key="4">
    <citation type="submission" date="2004-10" db="EMBL/GenBank/DDBJ databases">
        <authorList>
            <person name="Underwood B.A."/>
            <person name="Xiao Y.-L."/>
            <person name="Moskal W.A. Jr."/>
            <person name="Monaghan E.L."/>
            <person name="Wang W."/>
            <person name="Redman J.C."/>
            <person name="Wu H.C."/>
            <person name="Utterback T."/>
            <person name="Town C.D."/>
        </authorList>
    </citation>
    <scope>NUCLEOTIDE SEQUENCE [LARGE SCALE MRNA] (ISOFORM 2)</scope>
    <source>
        <strain>cv. Columbia</strain>
    </source>
</reference>
<comment type="alternative products">
    <event type="alternative splicing"/>
    <isoform>
        <id>Q9SIU9-1</id>
        <name>1</name>
        <sequence type="displayed"/>
    </isoform>
    <isoform>
        <id>Q9SIU9-2</id>
        <name>2</name>
        <sequence type="described" ref="VSP_036246"/>
    </isoform>
    <isoform>
        <id>Q9SIU9-3</id>
        <name>3</name>
        <sequence type="described" ref="VSP_036245"/>
    </isoform>
</comment>
<comment type="similarity">
    <text evidence="4">Belongs to the UPF0725 (EMB2204) family.</text>
</comment>
<accession>Q9SIU9</accession>
<accession>Q84X35</accession>
<accession>Q84X36</accession>
<keyword id="KW-0025">Alternative splicing</keyword>
<keyword id="KW-1185">Reference proteome</keyword>
<protein>
    <recommendedName>
        <fullName>UPF0725 protein At2g20620</fullName>
    </recommendedName>
</protein>
<organism>
    <name type="scientific">Arabidopsis thaliana</name>
    <name type="common">Mouse-ear cress</name>
    <dbReference type="NCBI Taxonomy" id="3702"/>
    <lineage>
        <taxon>Eukaryota</taxon>
        <taxon>Viridiplantae</taxon>
        <taxon>Streptophyta</taxon>
        <taxon>Embryophyta</taxon>
        <taxon>Tracheophyta</taxon>
        <taxon>Spermatophyta</taxon>
        <taxon>Magnoliopsida</taxon>
        <taxon>eudicotyledons</taxon>
        <taxon>Gunneridae</taxon>
        <taxon>Pentapetalae</taxon>
        <taxon>rosids</taxon>
        <taxon>malvids</taxon>
        <taxon>Brassicales</taxon>
        <taxon>Brassicaceae</taxon>
        <taxon>Camelineae</taxon>
        <taxon>Arabidopsis</taxon>
    </lineage>
</organism>
<sequence length="286" mass="31926">MVLETPVCSPIDKESSSDDVQLNKPPKKKRKLDVVYPPRDNTSSSSDVKPKVPGYCGVKAIGCNRSDELLAEVALHSYNSQTGTNLELMTVTQVMLQSVAHINYHMILDAFDPANNSLSSIEICLWDAAVKNNEKLRLVTTFCSLEGSGDKGSQWDPNGVDVLYTGVMPKWLDDGALSGSEKLHYYEVNDSDLQENKWLHLYAQVGAYSKWDLGMVKHFPLEIKKVVVQTMEDDIESNLKLKSSNAIFYITFTTSGGVECACIIRQTRNGRPQHMCLEINNVEMDK</sequence>
<gene>
    <name type="ordered locus">At2g20620</name>
    <name type="ORF">F23N11.6</name>
</gene>
<feature type="chain" id="PRO_0000363120" description="UPF0725 protein At2g20620">
    <location>
        <begin position="1"/>
        <end position="286"/>
    </location>
</feature>
<feature type="region of interest" description="Disordered" evidence="1">
    <location>
        <begin position="1"/>
        <end position="49"/>
    </location>
</feature>
<feature type="splice variant" id="VSP_036245" description="In isoform 3." evidence="2">
    <original>GTNLELMTVTQVMLQSVAHINYHMILDAFDPANNSLSSIEICLWDAAVKNNEKLRLVTTFCSLEGSGDKGSQWDPNGVDVLYTGVMPKWLDDGALSGSEKLHYYEVNDSDLQENKWLHLYAQVGAYSKWDLGMVKHFPLEIKKVVVQTMEDDIESNLKLKSSNAIFYITFTTSGGVECACIIRQTRNGRPQHMCLEINNVEMDK</original>
    <variation>VTLIYIALILASPHLYFFFFFGF</variation>
    <location>
        <begin position="83"/>
        <end position="286"/>
    </location>
</feature>
<feature type="splice variant" id="VSP_036246" description="In isoform 2." evidence="2 3">
    <original>GSGDKGSQWDPNGVDVLYTGVMPKWLDDGALSGSEKLHYYEVNDSDLQENKWLHLYAQVGAYSKWDLGMVKHFPLEIKKVVVQTMEDDIESNLKLKSSNAIFYITFTTSGGVECACIIRQTRNGRPQHMCLEINNVEMDK</original>
    <variation>VCCRVWR</variation>
    <location>
        <begin position="147"/>
        <end position="286"/>
    </location>
</feature>
<dbReference type="EMBL" id="AC007048">
    <property type="protein sequence ID" value="AAD21705.1"/>
    <property type="molecule type" value="Genomic_DNA"/>
</dbReference>
<dbReference type="EMBL" id="CP002685">
    <property type="protein sequence ID" value="AEC07047.1"/>
    <property type="molecule type" value="Genomic_DNA"/>
</dbReference>
<dbReference type="EMBL" id="AY219069">
    <property type="protein sequence ID" value="AAO37156.1"/>
    <property type="molecule type" value="mRNA"/>
</dbReference>
<dbReference type="EMBL" id="AY219070">
    <property type="protein sequence ID" value="AAO37157.1"/>
    <property type="molecule type" value="mRNA"/>
</dbReference>
<dbReference type="EMBL" id="AY773847">
    <property type="protein sequence ID" value="AAV63876.1"/>
    <property type="molecule type" value="mRNA"/>
</dbReference>
<dbReference type="PIR" id="D84591">
    <property type="entry name" value="D84591"/>
</dbReference>
<dbReference type="RefSeq" id="NP_179653.1">
    <molecule id="Q9SIU9-1"/>
    <property type="nucleotide sequence ID" value="NM_127625.2"/>
</dbReference>
<dbReference type="SMR" id="Q9SIU9"/>
<dbReference type="PaxDb" id="3702-AT2G20620.1"/>
<dbReference type="EnsemblPlants" id="AT2G20620.1">
    <molecule id="Q9SIU9-1"/>
    <property type="protein sequence ID" value="AT2G20620.1"/>
    <property type="gene ID" value="AT2G20620"/>
</dbReference>
<dbReference type="GeneID" id="816588"/>
<dbReference type="Gramene" id="AT2G20620.1">
    <molecule id="Q9SIU9-1"/>
    <property type="protein sequence ID" value="AT2G20620.1"/>
    <property type="gene ID" value="AT2G20620"/>
</dbReference>
<dbReference type="KEGG" id="ath:AT2G20620"/>
<dbReference type="Araport" id="AT2G20620"/>
<dbReference type="TAIR" id="AT2G20620"/>
<dbReference type="HOGENOM" id="CLU_053767_2_3_1"/>
<dbReference type="InParanoid" id="Q9SIU9"/>
<dbReference type="OMA" id="SLWRWDP"/>
<dbReference type="PhylomeDB" id="Q9SIU9"/>
<dbReference type="PRO" id="PR:Q9SIU9"/>
<dbReference type="Proteomes" id="UP000006548">
    <property type="component" value="Chromosome 2"/>
</dbReference>
<dbReference type="ExpressionAtlas" id="Q9SIU9">
    <property type="expression patterns" value="baseline and differential"/>
</dbReference>
<dbReference type="Gene3D" id="3.10.450.10">
    <property type="match status" value="1"/>
</dbReference>
<dbReference type="InterPro" id="IPR046350">
    <property type="entry name" value="Cystatin_sf"/>
</dbReference>
<dbReference type="InterPro" id="IPR006462">
    <property type="entry name" value="MS5"/>
</dbReference>
<dbReference type="NCBIfam" id="TIGR01572">
    <property type="entry name" value="A_thl_para_3677"/>
    <property type="match status" value="1"/>
</dbReference>
<dbReference type="PANTHER" id="PTHR31260:SF39">
    <property type="entry name" value="BNAA09G28770D PROTEIN"/>
    <property type="match status" value="1"/>
</dbReference>
<dbReference type="PANTHER" id="PTHR31260">
    <property type="entry name" value="CYSTATIN/MONELLIN SUPERFAMILY PROTEIN"/>
    <property type="match status" value="1"/>
</dbReference>
<dbReference type="Pfam" id="PF04776">
    <property type="entry name" value="protein_MS5"/>
    <property type="match status" value="1"/>
</dbReference>
<dbReference type="SUPFAM" id="SSF54403">
    <property type="entry name" value="Cystatin/monellin"/>
    <property type="match status" value="1"/>
</dbReference>
<evidence type="ECO:0000256" key="1">
    <source>
        <dbReference type="SAM" id="MobiDB-lite"/>
    </source>
</evidence>
<evidence type="ECO:0000303" key="2">
    <source>
    </source>
</evidence>
<evidence type="ECO:0000303" key="3">
    <source ref="4"/>
</evidence>
<evidence type="ECO:0000305" key="4"/>
<proteinExistence type="evidence at transcript level"/>